<organism>
    <name type="scientific">Bordetella pertussis (strain Tohama I / ATCC BAA-589 / NCTC 13251)</name>
    <dbReference type="NCBI Taxonomy" id="257313"/>
    <lineage>
        <taxon>Bacteria</taxon>
        <taxon>Pseudomonadati</taxon>
        <taxon>Pseudomonadota</taxon>
        <taxon>Betaproteobacteria</taxon>
        <taxon>Burkholderiales</taxon>
        <taxon>Alcaligenaceae</taxon>
        <taxon>Bordetella</taxon>
    </lineage>
</organism>
<keyword id="KW-0349">Heme</keyword>
<keyword id="KW-0376">Hydrogen peroxide</keyword>
<keyword id="KW-0408">Iron</keyword>
<keyword id="KW-0479">Metal-binding</keyword>
<keyword id="KW-0560">Oxidoreductase</keyword>
<keyword id="KW-0575">Peroxidase</keyword>
<keyword id="KW-1185">Reference proteome</keyword>
<accession>P0A323</accession>
<accession>P48062</accession>
<dbReference type="EC" id="1.11.1.6"/>
<dbReference type="EMBL" id="U07800">
    <property type="protein sequence ID" value="AAA18481.1"/>
    <property type="molecule type" value="Unassigned_DNA"/>
</dbReference>
<dbReference type="EMBL" id="BX640422">
    <property type="protein sequence ID" value="CAE44107.1"/>
    <property type="molecule type" value="Genomic_DNA"/>
</dbReference>
<dbReference type="PIR" id="S60757">
    <property type="entry name" value="S60757"/>
</dbReference>
<dbReference type="RefSeq" id="NP_882347.1">
    <property type="nucleotide sequence ID" value="NC_002929.2"/>
</dbReference>
<dbReference type="SMR" id="P0A323"/>
<dbReference type="STRING" id="257313.BP3852"/>
<dbReference type="PaxDb" id="257313-BP3852"/>
<dbReference type="KEGG" id="bpe:BP3852"/>
<dbReference type="PATRIC" id="fig|257313.5.peg.4162"/>
<dbReference type="eggNOG" id="COG0753">
    <property type="taxonomic scope" value="Bacteria"/>
</dbReference>
<dbReference type="HOGENOM" id="CLU_010645_2_0_4"/>
<dbReference type="SABIO-RK" id="P0A323"/>
<dbReference type="Proteomes" id="UP000002676">
    <property type="component" value="Chromosome"/>
</dbReference>
<dbReference type="GO" id="GO:0005737">
    <property type="term" value="C:cytoplasm"/>
    <property type="evidence" value="ECO:0007669"/>
    <property type="project" value="TreeGrafter"/>
</dbReference>
<dbReference type="GO" id="GO:0004096">
    <property type="term" value="F:catalase activity"/>
    <property type="evidence" value="ECO:0007669"/>
    <property type="project" value="UniProtKB-EC"/>
</dbReference>
<dbReference type="GO" id="GO:0020037">
    <property type="term" value="F:heme binding"/>
    <property type="evidence" value="ECO:0007669"/>
    <property type="project" value="InterPro"/>
</dbReference>
<dbReference type="GO" id="GO:0046872">
    <property type="term" value="F:metal ion binding"/>
    <property type="evidence" value="ECO:0007669"/>
    <property type="project" value="UniProtKB-KW"/>
</dbReference>
<dbReference type="GO" id="GO:0042744">
    <property type="term" value="P:hydrogen peroxide catabolic process"/>
    <property type="evidence" value="ECO:0007669"/>
    <property type="project" value="UniProtKB-KW"/>
</dbReference>
<dbReference type="GO" id="GO:0042542">
    <property type="term" value="P:response to hydrogen peroxide"/>
    <property type="evidence" value="ECO:0007669"/>
    <property type="project" value="TreeGrafter"/>
</dbReference>
<dbReference type="CDD" id="cd08156">
    <property type="entry name" value="catalase_clade_3"/>
    <property type="match status" value="1"/>
</dbReference>
<dbReference type="FunFam" id="2.40.180.10:FF:000001">
    <property type="entry name" value="Catalase"/>
    <property type="match status" value="1"/>
</dbReference>
<dbReference type="Gene3D" id="2.40.180.10">
    <property type="entry name" value="Catalase core domain"/>
    <property type="match status" value="1"/>
</dbReference>
<dbReference type="InterPro" id="IPR018028">
    <property type="entry name" value="Catalase"/>
</dbReference>
<dbReference type="InterPro" id="IPR040333">
    <property type="entry name" value="Catalase_3"/>
</dbReference>
<dbReference type="InterPro" id="IPR024708">
    <property type="entry name" value="Catalase_AS"/>
</dbReference>
<dbReference type="InterPro" id="IPR024711">
    <property type="entry name" value="Catalase_clade1/3"/>
</dbReference>
<dbReference type="InterPro" id="IPR011614">
    <property type="entry name" value="Catalase_core"/>
</dbReference>
<dbReference type="InterPro" id="IPR002226">
    <property type="entry name" value="Catalase_haem_BS"/>
</dbReference>
<dbReference type="InterPro" id="IPR010582">
    <property type="entry name" value="Catalase_immune_responsive"/>
</dbReference>
<dbReference type="InterPro" id="IPR020835">
    <property type="entry name" value="Catalase_sf"/>
</dbReference>
<dbReference type="PANTHER" id="PTHR11465">
    <property type="entry name" value="CATALASE"/>
    <property type="match status" value="1"/>
</dbReference>
<dbReference type="PANTHER" id="PTHR11465:SF61">
    <property type="entry name" value="CATALASE"/>
    <property type="match status" value="1"/>
</dbReference>
<dbReference type="Pfam" id="PF00199">
    <property type="entry name" value="Catalase"/>
    <property type="match status" value="1"/>
</dbReference>
<dbReference type="Pfam" id="PF06628">
    <property type="entry name" value="Catalase-rel"/>
    <property type="match status" value="1"/>
</dbReference>
<dbReference type="PIRSF" id="PIRSF038928">
    <property type="entry name" value="Catalase_clade1-3"/>
    <property type="match status" value="1"/>
</dbReference>
<dbReference type="PRINTS" id="PR00067">
    <property type="entry name" value="CATALASE"/>
</dbReference>
<dbReference type="SMART" id="SM01060">
    <property type="entry name" value="Catalase"/>
    <property type="match status" value="1"/>
</dbReference>
<dbReference type="SUPFAM" id="SSF56634">
    <property type="entry name" value="Heme-dependent catalase-like"/>
    <property type="match status" value="1"/>
</dbReference>
<dbReference type="PROSITE" id="PS00437">
    <property type="entry name" value="CATALASE_1"/>
    <property type="match status" value="1"/>
</dbReference>
<dbReference type="PROSITE" id="PS00438">
    <property type="entry name" value="CATALASE_2"/>
    <property type="match status" value="1"/>
</dbReference>
<dbReference type="PROSITE" id="PS51402">
    <property type="entry name" value="CATALASE_3"/>
    <property type="match status" value="1"/>
</dbReference>
<feature type="chain" id="PRO_0000084979" description="Catalase">
    <location>
        <begin position="1"/>
        <end position="482"/>
    </location>
</feature>
<feature type="region of interest" description="Disordered" evidence="3">
    <location>
        <begin position="1"/>
        <end position="21"/>
    </location>
</feature>
<feature type="compositionally biased region" description="Polar residues" evidence="3">
    <location>
        <begin position="1"/>
        <end position="11"/>
    </location>
</feature>
<feature type="active site" evidence="2">
    <location>
        <position position="57"/>
    </location>
</feature>
<feature type="active site" evidence="2">
    <location>
        <position position="130"/>
    </location>
</feature>
<feature type="binding site" description="axial binding residue" evidence="1">
    <location>
        <position position="340"/>
    </location>
    <ligand>
        <name>heme</name>
        <dbReference type="ChEBI" id="CHEBI:30413"/>
    </ligand>
    <ligandPart>
        <name>Fe</name>
        <dbReference type="ChEBI" id="CHEBI:18248"/>
    </ligandPart>
</feature>
<comment type="function">
    <text>Decomposes hydrogen peroxide into water and oxygen; serves to protect cells from the toxic effects of hydrogen peroxide.</text>
</comment>
<comment type="catalytic activity">
    <reaction evidence="2">
        <text>2 H2O2 = O2 + 2 H2O</text>
        <dbReference type="Rhea" id="RHEA:20309"/>
        <dbReference type="ChEBI" id="CHEBI:15377"/>
        <dbReference type="ChEBI" id="CHEBI:15379"/>
        <dbReference type="ChEBI" id="CHEBI:16240"/>
        <dbReference type="EC" id="1.11.1.6"/>
    </reaction>
</comment>
<comment type="cofactor">
    <cofactor evidence="1">
        <name>heme</name>
        <dbReference type="ChEBI" id="CHEBI:30413"/>
    </cofactor>
</comment>
<comment type="subunit">
    <text evidence="1">Homodimer.</text>
</comment>
<comment type="miscellaneous">
    <text>Essential for protection against exogenous H(2)O(2); however its absence does not affect survival of B.pertussis within human polymorphonuclear leukocytes.</text>
</comment>
<comment type="similarity">
    <text evidence="4">Belongs to the catalase family.</text>
</comment>
<reference key="1">
    <citation type="journal article" date="1994" name="Mol. Microbiol.">
        <title>Molecular characterization of catalase from Bordetella pertussis: identification of the katA promoter in an upstream insertion sequence.</title>
        <authorList>
            <person name="DeShazer D."/>
            <person name="Wood G.E."/>
            <person name="Friedman R.L."/>
        </authorList>
    </citation>
    <scope>NUCLEOTIDE SEQUENCE [GENOMIC DNA]</scope>
    <scope>CHARACTERIZATION OF ITS ROLE IN SURVIVAL IN HUMAN POLYMORPHONUCLEAR LEUKOCYTES</scope>
    <source>
        <strain>BP504</strain>
    </source>
</reference>
<reference key="2">
    <citation type="journal article" date="2003" name="Nat. Genet.">
        <title>Comparative analysis of the genome sequences of Bordetella pertussis, Bordetella parapertussis and Bordetella bronchiseptica.</title>
        <authorList>
            <person name="Parkhill J."/>
            <person name="Sebaihia M."/>
            <person name="Preston A."/>
            <person name="Murphy L.D."/>
            <person name="Thomson N.R."/>
            <person name="Harris D.E."/>
            <person name="Holden M.T.G."/>
            <person name="Churcher C.M."/>
            <person name="Bentley S.D."/>
            <person name="Mungall K.L."/>
            <person name="Cerdeno-Tarraga A.-M."/>
            <person name="Temple L."/>
            <person name="James K.D."/>
            <person name="Harris B."/>
            <person name="Quail M.A."/>
            <person name="Achtman M."/>
            <person name="Atkin R."/>
            <person name="Baker S."/>
            <person name="Basham D."/>
            <person name="Bason N."/>
            <person name="Cherevach I."/>
            <person name="Chillingworth T."/>
            <person name="Collins M."/>
            <person name="Cronin A."/>
            <person name="Davis P."/>
            <person name="Doggett J."/>
            <person name="Feltwell T."/>
            <person name="Goble A."/>
            <person name="Hamlin N."/>
            <person name="Hauser H."/>
            <person name="Holroyd S."/>
            <person name="Jagels K."/>
            <person name="Leather S."/>
            <person name="Moule S."/>
            <person name="Norberczak H."/>
            <person name="O'Neil S."/>
            <person name="Ormond D."/>
            <person name="Price C."/>
            <person name="Rabbinowitsch E."/>
            <person name="Rutter S."/>
            <person name="Sanders M."/>
            <person name="Saunders D."/>
            <person name="Seeger K."/>
            <person name="Sharp S."/>
            <person name="Simmonds M."/>
            <person name="Skelton J."/>
            <person name="Squares R."/>
            <person name="Squares S."/>
            <person name="Stevens K."/>
            <person name="Unwin L."/>
            <person name="Whitehead S."/>
            <person name="Barrell B.G."/>
            <person name="Maskell D.J."/>
        </authorList>
    </citation>
    <scope>NUCLEOTIDE SEQUENCE [LARGE SCALE GENOMIC DNA]</scope>
    <source>
        <strain>Tohama I / ATCC BAA-589 / NCTC 13251</strain>
    </source>
</reference>
<protein>
    <recommendedName>
        <fullName>Catalase</fullName>
        <ecNumber>1.11.1.6</ecNumber>
    </recommendedName>
</protein>
<sequence>MNAMTNKTLTTAAGAPVADNNNTMTAGPRGPALLQDVWFLEKLAHFDRERIPERVVHAKGSGAYGTFTVTHDISRYTRARIFAEVGKQTPLFLRFSTVAGERGAADAERDVRGFAIKFYTDEGNWDLVGNNTPVFFIRDPLKFPDFIHTQKRDPKTNLRNATAAWDFWSLNPESLHQVTILMSDRGLPQNYRQQHGFGSHTYSFVNDAGERFYVKFHFKSQQGIACYTDGEAAELVGRDRESAQRDLFQNIEQGQFPRWTLKVQVMPEAEAATYHINPFDLTKVWPHADYPLIEVGVLELNKNPENYFAEVEQAAFTPANVVPGIGFSPDKMLQGRLFSYGDTHRYRLGINHHQIPVNAPRCPFHSFHRDGMGRVDGNGGATLNYEPNSFGEWREAKHAAEPPLALDGQAADRWNHRVDEDYYSQPGALFRLMNDDQKQQLFGNIGRHMAGVPEEIQRRQLEHFRRADPAYAAGVAKALGLK</sequence>
<evidence type="ECO:0000250" key="1"/>
<evidence type="ECO:0000255" key="2">
    <source>
        <dbReference type="PROSITE-ProRule" id="PRU10013"/>
    </source>
</evidence>
<evidence type="ECO:0000256" key="3">
    <source>
        <dbReference type="SAM" id="MobiDB-lite"/>
    </source>
</evidence>
<evidence type="ECO:0000305" key="4"/>
<name>CATA_BORPE</name>
<gene>
    <name type="primary">katA</name>
    <name type="ordered locus">BP3852</name>
</gene>
<proteinExistence type="evidence at protein level"/>